<reference key="1">
    <citation type="submission" date="2007-07" db="EMBL/GenBank/DDBJ databases">
        <title>Genome sequence of Campylobacter curvus 525.92 isolated from human feces.</title>
        <authorList>
            <person name="Fouts D.E."/>
            <person name="Mongodin E.F."/>
            <person name="Puiu D."/>
            <person name="Sebastian Y."/>
            <person name="Miller W.G."/>
            <person name="Mandrell R.E."/>
            <person name="Lastovica A.J."/>
            <person name="Nelson K.E."/>
        </authorList>
    </citation>
    <scope>NUCLEOTIDE SEQUENCE [LARGE SCALE GENOMIC DNA]</scope>
    <source>
        <strain>525.92</strain>
    </source>
</reference>
<comment type="similarity">
    <text evidence="1">Belongs to the universal ribosomal protein uS2 family.</text>
</comment>
<comment type="sequence caution" evidence="3">
    <conflict type="erroneous initiation">
        <sequence resource="EMBL-CDS" id="EAU00943"/>
    </conflict>
</comment>
<accession>A7GWR7</accession>
<organism>
    <name type="scientific">Campylobacter curvus (strain 525.92)</name>
    <dbReference type="NCBI Taxonomy" id="360105"/>
    <lineage>
        <taxon>Bacteria</taxon>
        <taxon>Pseudomonadati</taxon>
        <taxon>Campylobacterota</taxon>
        <taxon>Epsilonproteobacteria</taxon>
        <taxon>Campylobacterales</taxon>
        <taxon>Campylobacteraceae</taxon>
        <taxon>Campylobacter</taxon>
    </lineage>
</organism>
<gene>
    <name evidence="1" type="primary">rpsB</name>
    <name type="ordered locus">Ccur92_03550</name>
    <name type="ORF">CCV52592_1262</name>
</gene>
<proteinExistence type="inferred from homology"/>
<protein>
    <recommendedName>
        <fullName evidence="1">Small ribosomal subunit protein uS2</fullName>
    </recommendedName>
    <alternativeName>
        <fullName evidence="3">30S ribosomal protein S2</fullName>
    </alternativeName>
</protein>
<keyword id="KW-1185">Reference proteome</keyword>
<keyword id="KW-0687">Ribonucleoprotein</keyword>
<keyword id="KW-0689">Ribosomal protein</keyword>
<dbReference type="EMBL" id="CP000767">
    <property type="protein sequence ID" value="EAU00943.2"/>
    <property type="status" value="ALT_INIT"/>
    <property type="molecule type" value="Genomic_DNA"/>
</dbReference>
<dbReference type="RefSeq" id="WP_041743191.1">
    <property type="nucleotide sequence ID" value="NC_009715.2"/>
</dbReference>
<dbReference type="SMR" id="A7GWR7"/>
<dbReference type="STRING" id="360105.CCV52592_1262"/>
<dbReference type="KEGG" id="ccv:CCV52592_1262"/>
<dbReference type="HOGENOM" id="CLU_040318_1_2_7"/>
<dbReference type="OrthoDB" id="9808036at2"/>
<dbReference type="Proteomes" id="UP000006380">
    <property type="component" value="Chromosome"/>
</dbReference>
<dbReference type="GO" id="GO:0022627">
    <property type="term" value="C:cytosolic small ribosomal subunit"/>
    <property type="evidence" value="ECO:0007669"/>
    <property type="project" value="TreeGrafter"/>
</dbReference>
<dbReference type="GO" id="GO:0003735">
    <property type="term" value="F:structural constituent of ribosome"/>
    <property type="evidence" value="ECO:0007669"/>
    <property type="project" value="InterPro"/>
</dbReference>
<dbReference type="GO" id="GO:0006412">
    <property type="term" value="P:translation"/>
    <property type="evidence" value="ECO:0007669"/>
    <property type="project" value="UniProtKB-UniRule"/>
</dbReference>
<dbReference type="CDD" id="cd01425">
    <property type="entry name" value="RPS2"/>
    <property type="match status" value="1"/>
</dbReference>
<dbReference type="FunFam" id="1.10.287.610:FF:000001">
    <property type="entry name" value="30S ribosomal protein S2"/>
    <property type="match status" value="1"/>
</dbReference>
<dbReference type="Gene3D" id="3.40.50.10490">
    <property type="entry name" value="Glucose-6-phosphate isomerase like protein, domain 1"/>
    <property type="match status" value="1"/>
</dbReference>
<dbReference type="Gene3D" id="1.10.287.610">
    <property type="entry name" value="Helix hairpin bin"/>
    <property type="match status" value="1"/>
</dbReference>
<dbReference type="HAMAP" id="MF_00291_B">
    <property type="entry name" value="Ribosomal_uS2_B"/>
    <property type="match status" value="1"/>
</dbReference>
<dbReference type="InterPro" id="IPR001865">
    <property type="entry name" value="Ribosomal_uS2"/>
</dbReference>
<dbReference type="InterPro" id="IPR005706">
    <property type="entry name" value="Ribosomal_uS2_bac/mit/plastid"/>
</dbReference>
<dbReference type="InterPro" id="IPR018130">
    <property type="entry name" value="Ribosomal_uS2_CS"/>
</dbReference>
<dbReference type="InterPro" id="IPR023591">
    <property type="entry name" value="Ribosomal_uS2_flav_dom_sf"/>
</dbReference>
<dbReference type="NCBIfam" id="TIGR01011">
    <property type="entry name" value="rpsB_bact"/>
    <property type="match status" value="1"/>
</dbReference>
<dbReference type="PANTHER" id="PTHR12534">
    <property type="entry name" value="30S RIBOSOMAL PROTEIN S2 PROKARYOTIC AND ORGANELLAR"/>
    <property type="match status" value="1"/>
</dbReference>
<dbReference type="PANTHER" id="PTHR12534:SF0">
    <property type="entry name" value="SMALL RIBOSOMAL SUBUNIT PROTEIN US2M"/>
    <property type="match status" value="1"/>
</dbReference>
<dbReference type="Pfam" id="PF00318">
    <property type="entry name" value="Ribosomal_S2"/>
    <property type="match status" value="1"/>
</dbReference>
<dbReference type="PRINTS" id="PR00395">
    <property type="entry name" value="RIBOSOMALS2"/>
</dbReference>
<dbReference type="SUPFAM" id="SSF52313">
    <property type="entry name" value="Ribosomal protein S2"/>
    <property type="match status" value="1"/>
</dbReference>
<dbReference type="PROSITE" id="PS00962">
    <property type="entry name" value="RIBOSOMAL_S2_1"/>
    <property type="match status" value="1"/>
</dbReference>
<dbReference type="PROSITE" id="PS00963">
    <property type="entry name" value="RIBOSOMAL_S2_2"/>
    <property type="match status" value="1"/>
</dbReference>
<sequence length="263" mass="29979">MVTMRDLLECGVHFGHQTRRWNPKMKRFIFGERKGIYIIDLQKTIRYFRYTYNIVRDAAAEGKTILFVGTKKQAVEAIKEYAEKCGMPYVNHRWLGGMMTNFGTIRQSIRKLEVIETMEEDGSINLLTKKEALMLRRKKEKLIATLGGIRNMKNLPDMVFIVDTVKEKIAVQEANRLKMPVVAPIDTNCDPDVVDYPIPGNDDAIRSVQLFCQEMAEAINEGKSLLEQDSDANADEAEVSQEEKDAVVAEAMSEEDFASEDDE</sequence>
<name>RS2_CAMC5</name>
<feature type="chain" id="PRO_0000351984" description="Small ribosomal subunit protein uS2">
    <location>
        <begin position="1"/>
        <end position="263"/>
    </location>
</feature>
<feature type="region of interest" description="Disordered" evidence="2">
    <location>
        <begin position="223"/>
        <end position="246"/>
    </location>
</feature>
<feature type="compositionally biased region" description="Acidic residues" evidence="2">
    <location>
        <begin position="228"/>
        <end position="240"/>
    </location>
</feature>
<evidence type="ECO:0000255" key="1">
    <source>
        <dbReference type="HAMAP-Rule" id="MF_00291"/>
    </source>
</evidence>
<evidence type="ECO:0000256" key="2">
    <source>
        <dbReference type="SAM" id="MobiDB-lite"/>
    </source>
</evidence>
<evidence type="ECO:0000305" key="3"/>